<comment type="function">
    <text evidence="1">Catalyzes the isomerization between 2-isopropylmalate and 3-isopropylmalate, via the formation of 2-isopropylmaleate.</text>
</comment>
<comment type="catalytic activity">
    <reaction>
        <text>(2R,3S)-3-isopropylmalate = (2S)-2-isopropylmalate</text>
        <dbReference type="Rhea" id="RHEA:32287"/>
        <dbReference type="ChEBI" id="CHEBI:1178"/>
        <dbReference type="ChEBI" id="CHEBI:35121"/>
        <dbReference type="EC" id="4.2.1.33"/>
    </reaction>
</comment>
<comment type="pathway">
    <text>Amino-acid biosynthesis; L-leucine biosynthesis; L-leucine from 3-methyl-2-oxobutanoate: step 2/4.</text>
</comment>
<comment type="subunit">
    <text evidence="1">Heterodimer of LeuC and LeuD.</text>
</comment>
<comment type="similarity">
    <text evidence="2">Belongs to the LeuD family. LeuD type 2 subfamily.</text>
</comment>
<accession>Q974Q9</accession>
<accession>F9VN51</accession>
<sequence>MIVEGKVLKFGDKIDTDIIIPARYLKYTDPQYLAQHAMEPLDPEFYKKASAGVILVAGKVFGMGSSREQAAIALKAAGVRAIIAESFARIFYRNAINNGLPAIVLPGVTQLINEGDYVKINVETGEIIVNNQKVYKGRGITGMPLKILESGGLLDYLKKVSVQNQGGN</sequence>
<keyword id="KW-0028">Amino-acid biosynthesis</keyword>
<keyword id="KW-0100">Branched-chain amino acid biosynthesis</keyword>
<keyword id="KW-0432">Leucine biosynthesis</keyword>
<keyword id="KW-0456">Lyase</keyword>
<keyword id="KW-1185">Reference proteome</keyword>
<reference key="1">
    <citation type="journal article" date="2001" name="DNA Res.">
        <title>Complete genome sequence of an aerobic thermoacidophilic Crenarchaeon, Sulfolobus tokodaii strain7.</title>
        <authorList>
            <person name="Kawarabayasi Y."/>
            <person name="Hino Y."/>
            <person name="Horikawa H."/>
            <person name="Jin-no K."/>
            <person name="Takahashi M."/>
            <person name="Sekine M."/>
            <person name="Baba S."/>
            <person name="Ankai A."/>
            <person name="Kosugi H."/>
            <person name="Hosoyama A."/>
            <person name="Fukui S."/>
            <person name="Nagai Y."/>
            <person name="Nishijima K."/>
            <person name="Otsuka R."/>
            <person name="Nakazawa H."/>
            <person name="Takamiya M."/>
            <person name="Kato Y."/>
            <person name="Yoshizawa T."/>
            <person name="Tanaka T."/>
            <person name="Kudoh Y."/>
            <person name="Yamazaki J."/>
            <person name="Kushida N."/>
            <person name="Oguchi A."/>
            <person name="Aoki K."/>
            <person name="Masuda S."/>
            <person name="Yanagii M."/>
            <person name="Nishimura M."/>
            <person name="Yamagishi A."/>
            <person name="Oshima T."/>
            <person name="Kikuchi H."/>
        </authorList>
    </citation>
    <scope>NUCLEOTIDE SEQUENCE [LARGE SCALE GENOMIC DNA]</scope>
    <source>
        <strain>DSM 16993 / JCM 10545 / NBRC 100140 / 7</strain>
    </source>
</reference>
<feature type="chain" id="PRO_0000141953" description="3-isopropylmalate dehydratase small subunit">
    <location>
        <begin position="1"/>
        <end position="168"/>
    </location>
</feature>
<protein>
    <recommendedName>
        <fullName>3-isopropylmalate dehydratase small subunit</fullName>
        <ecNumber>4.2.1.33</ecNumber>
    </recommendedName>
    <alternativeName>
        <fullName>Alpha-IPM isomerase</fullName>
        <shortName>IPMI</shortName>
    </alternativeName>
    <alternativeName>
        <fullName>Isopropylmalate isomerase</fullName>
    </alternativeName>
</protein>
<name>LEUD_SULTO</name>
<proteinExistence type="inferred from homology"/>
<organism>
    <name type="scientific">Sulfurisphaera tokodaii (strain DSM 16993 / JCM 10545 / NBRC 100140 / 7)</name>
    <name type="common">Sulfolobus tokodaii</name>
    <dbReference type="NCBI Taxonomy" id="273063"/>
    <lineage>
        <taxon>Archaea</taxon>
        <taxon>Thermoproteota</taxon>
        <taxon>Thermoprotei</taxon>
        <taxon>Sulfolobales</taxon>
        <taxon>Sulfolobaceae</taxon>
        <taxon>Sulfurisphaera</taxon>
    </lineage>
</organism>
<gene>
    <name type="primary">leuD</name>
    <name type="ordered locus">STK_06000</name>
</gene>
<evidence type="ECO:0000250" key="1"/>
<evidence type="ECO:0000305" key="2"/>
<dbReference type="EC" id="4.2.1.33"/>
<dbReference type="EMBL" id="BA000023">
    <property type="protein sequence ID" value="BAK54348.1"/>
    <property type="molecule type" value="Genomic_DNA"/>
</dbReference>
<dbReference type="RefSeq" id="WP_010978581.1">
    <property type="nucleotide sequence ID" value="NC_003106.2"/>
</dbReference>
<dbReference type="SMR" id="Q974Q9"/>
<dbReference type="STRING" id="273063.STK_06000"/>
<dbReference type="KEGG" id="sto:STK_06000"/>
<dbReference type="PATRIC" id="fig|273063.9.peg.682"/>
<dbReference type="eggNOG" id="arCOG02230">
    <property type="taxonomic scope" value="Archaea"/>
</dbReference>
<dbReference type="OrthoDB" id="6505at2157"/>
<dbReference type="UniPathway" id="UPA00048">
    <property type="reaction ID" value="UER00071"/>
</dbReference>
<dbReference type="Proteomes" id="UP000001015">
    <property type="component" value="Chromosome"/>
</dbReference>
<dbReference type="GO" id="GO:0003861">
    <property type="term" value="F:3-isopropylmalate dehydratase activity"/>
    <property type="evidence" value="ECO:0007669"/>
    <property type="project" value="UniProtKB-UniRule"/>
</dbReference>
<dbReference type="GO" id="GO:0009098">
    <property type="term" value="P:L-leucine biosynthetic process"/>
    <property type="evidence" value="ECO:0007669"/>
    <property type="project" value="UniProtKB-UniRule"/>
</dbReference>
<dbReference type="CDD" id="cd01577">
    <property type="entry name" value="IPMI_Swivel"/>
    <property type="match status" value="1"/>
</dbReference>
<dbReference type="Gene3D" id="3.20.19.10">
    <property type="entry name" value="Aconitase, domain 4"/>
    <property type="match status" value="1"/>
</dbReference>
<dbReference type="HAMAP" id="MF_01032">
    <property type="entry name" value="LeuD_type2"/>
    <property type="match status" value="1"/>
</dbReference>
<dbReference type="InterPro" id="IPR015928">
    <property type="entry name" value="Aconitase/3IPM_dehydase_swvl"/>
</dbReference>
<dbReference type="InterPro" id="IPR000573">
    <property type="entry name" value="AconitaseA/IPMdHydase_ssu_swvl"/>
</dbReference>
<dbReference type="InterPro" id="IPR033940">
    <property type="entry name" value="IPMI_Swivel"/>
</dbReference>
<dbReference type="InterPro" id="IPR050075">
    <property type="entry name" value="LeuD"/>
</dbReference>
<dbReference type="InterPro" id="IPR011827">
    <property type="entry name" value="LeuD_type2/HacB/DmdB"/>
</dbReference>
<dbReference type="NCBIfam" id="TIGR02087">
    <property type="entry name" value="LEUD_arch"/>
    <property type="match status" value="1"/>
</dbReference>
<dbReference type="PANTHER" id="PTHR43345:SF2">
    <property type="entry name" value="3-ISOPROPYLMALATE DEHYDRATASE SMALL SUBUNIT 1"/>
    <property type="match status" value="1"/>
</dbReference>
<dbReference type="PANTHER" id="PTHR43345">
    <property type="entry name" value="3-ISOPROPYLMALATE DEHYDRATASE SMALL SUBUNIT 2-RELATED-RELATED"/>
    <property type="match status" value="1"/>
</dbReference>
<dbReference type="Pfam" id="PF00694">
    <property type="entry name" value="Aconitase_C"/>
    <property type="match status" value="1"/>
</dbReference>
<dbReference type="SUPFAM" id="SSF52016">
    <property type="entry name" value="LeuD/IlvD-like"/>
    <property type="match status" value="1"/>
</dbReference>